<accession>Q73AW1</accession>
<sequence length="266" mass="29263">MKEIKVIIAGPRGRMGHEAVLLMERTEHFNLVAAVDYKHGGEKISDLPGMPALDTPIYADLHTCLEEVEADVLLDLTTPEVGKQHVTLAVERGLRSVIGTTGFTEEELKQLTETAKEKAVGTIIAPNFAIGAVLMMKFSQMAAKYFQDVEVIELHHDQKLDAPSGTAVKTVELIRQNRESKQQGHPNEVEQLKGARGANVDGIHIHSVRLPGLIAHQEVMFGGDGQMLTVRHDSFNRASFMSGVKLSIETVMNLDHLVYGLENIID</sequence>
<evidence type="ECO:0000255" key="1">
    <source>
        <dbReference type="HAMAP-Rule" id="MF_00102"/>
    </source>
</evidence>
<evidence type="ECO:0000305" key="2"/>
<feature type="chain" id="PRO_0000228321" description="4-hydroxy-tetrahydrodipicolinate reductase">
    <location>
        <begin position="1"/>
        <end position="266"/>
    </location>
</feature>
<feature type="active site" description="Proton donor/acceptor" evidence="1">
    <location>
        <position position="155"/>
    </location>
</feature>
<feature type="active site" description="Proton donor" evidence="1">
    <location>
        <position position="159"/>
    </location>
</feature>
<feature type="binding site" evidence="1">
    <location>
        <begin position="10"/>
        <end position="15"/>
    </location>
    <ligand>
        <name>NAD(+)</name>
        <dbReference type="ChEBI" id="CHEBI:57540"/>
    </ligand>
</feature>
<feature type="binding site" evidence="1">
    <location>
        <position position="38"/>
    </location>
    <ligand>
        <name>NADP(+)</name>
        <dbReference type="ChEBI" id="CHEBI:58349"/>
    </ligand>
</feature>
<feature type="binding site" evidence="1">
    <location>
        <begin position="99"/>
        <end position="101"/>
    </location>
    <ligand>
        <name>NAD(+)</name>
        <dbReference type="ChEBI" id="CHEBI:57540"/>
    </ligand>
</feature>
<feature type="binding site" evidence="1">
    <location>
        <begin position="125"/>
        <end position="128"/>
    </location>
    <ligand>
        <name>NAD(+)</name>
        <dbReference type="ChEBI" id="CHEBI:57540"/>
    </ligand>
</feature>
<feature type="binding site" evidence="1">
    <location>
        <position position="156"/>
    </location>
    <ligand>
        <name>(S)-2,3,4,5-tetrahydrodipicolinate</name>
        <dbReference type="ChEBI" id="CHEBI:16845"/>
    </ligand>
</feature>
<feature type="binding site" evidence="1">
    <location>
        <begin position="165"/>
        <end position="166"/>
    </location>
    <ligand>
        <name>(S)-2,3,4,5-tetrahydrodipicolinate</name>
        <dbReference type="ChEBI" id="CHEBI:16845"/>
    </ligand>
</feature>
<gene>
    <name evidence="1" type="primary">dapB</name>
    <name type="ordered locus">BCE_1661</name>
</gene>
<name>DAPB_BACC1</name>
<protein>
    <recommendedName>
        <fullName evidence="1">4-hydroxy-tetrahydrodipicolinate reductase</fullName>
        <shortName evidence="1">HTPA reductase</shortName>
        <ecNumber evidence="1">1.17.1.8</ecNumber>
    </recommendedName>
</protein>
<proteinExistence type="inferred from homology"/>
<organism>
    <name type="scientific">Bacillus cereus (strain ATCC 10987 / NRS 248)</name>
    <dbReference type="NCBI Taxonomy" id="222523"/>
    <lineage>
        <taxon>Bacteria</taxon>
        <taxon>Bacillati</taxon>
        <taxon>Bacillota</taxon>
        <taxon>Bacilli</taxon>
        <taxon>Bacillales</taxon>
        <taxon>Bacillaceae</taxon>
        <taxon>Bacillus</taxon>
        <taxon>Bacillus cereus group</taxon>
    </lineage>
</organism>
<reference key="1">
    <citation type="journal article" date="2004" name="Nucleic Acids Res.">
        <title>The genome sequence of Bacillus cereus ATCC 10987 reveals metabolic adaptations and a large plasmid related to Bacillus anthracis pXO1.</title>
        <authorList>
            <person name="Rasko D.A."/>
            <person name="Ravel J."/>
            <person name="Oekstad O.A."/>
            <person name="Helgason E."/>
            <person name="Cer R.Z."/>
            <person name="Jiang L."/>
            <person name="Shores K.A."/>
            <person name="Fouts D.E."/>
            <person name="Tourasse N.J."/>
            <person name="Angiuoli S.V."/>
            <person name="Kolonay J.F."/>
            <person name="Nelson W.C."/>
            <person name="Kolstoe A.-B."/>
            <person name="Fraser C.M."/>
            <person name="Read T.D."/>
        </authorList>
    </citation>
    <scope>NUCLEOTIDE SEQUENCE [LARGE SCALE GENOMIC DNA]</scope>
    <source>
        <strain>ATCC 10987 / NRS 248</strain>
    </source>
</reference>
<dbReference type="EC" id="1.17.1.8" evidence="1"/>
<dbReference type="EMBL" id="AE017194">
    <property type="protein sequence ID" value="AAS40590.1"/>
    <property type="molecule type" value="Genomic_DNA"/>
</dbReference>
<dbReference type="SMR" id="Q73AW1"/>
<dbReference type="KEGG" id="bca:BCE_1661"/>
<dbReference type="HOGENOM" id="CLU_047479_0_1_9"/>
<dbReference type="UniPathway" id="UPA00034">
    <property type="reaction ID" value="UER00018"/>
</dbReference>
<dbReference type="Proteomes" id="UP000002527">
    <property type="component" value="Chromosome"/>
</dbReference>
<dbReference type="GO" id="GO:0005829">
    <property type="term" value="C:cytosol"/>
    <property type="evidence" value="ECO:0007669"/>
    <property type="project" value="TreeGrafter"/>
</dbReference>
<dbReference type="GO" id="GO:0008839">
    <property type="term" value="F:4-hydroxy-tetrahydrodipicolinate reductase"/>
    <property type="evidence" value="ECO:0007669"/>
    <property type="project" value="UniProtKB-EC"/>
</dbReference>
<dbReference type="GO" id="GO:0051287">
    <property type="term" value="F:NAD binding"/>
    <property type="evidence" value="ECO:0007669"/>
    <property type="project" value="UniProtKB-UniRule"/>
</dbReference>
<dbReference type="GO" id="GO:0050661">
    <property type="term" value="F:NADP binding"/>
    <property type="evidence" value="ECO:0007669"/>
    <property type="project" value="UniProtKB-UniRule"/>
</dbReference>
<dbReference type="GO" id="GO:0016726">
    <property type="term" value="F:oxidoreductase activity, acting on CH or CH2 groups, NAD or NADP as acceptor"/>
    <property type="evidence" value="ECO:0007669"/>
    <property type="project" value="UniProtKB-UniRule"/>
</dbReference>
<dbReference type="GO" id="GO:0019877">
    <property type="term" value="P:diaminopimelate biosynthetic process"/>
    <property type="evidence" value="ECO:0007669"/>
    <property type="project" value="UniProtKB-UniRule"/>
</dbReference>
<dbReference type="GO" id="GO:0009089">
    <property type="term" value="P:lysine biosynthetic process via diaminopimelate"/>
    <property type="evidence" value="ECO:0007669"/>
    <property type="project" value="UniProtKB-UniRule"/>
</dbReference>
<dbReference type="CDD" id="cd02274">
    <property type="entry name" value="DHDPR_N"/>
    <property type="match status" value="1"/>
</dbReference>
<dbReference type="FunFam" id="3.30.360.10:FF:000009">
    <property type="entry name" value="4-hydroxy-tetrahydrodipicolinate reductase"/>
    <property type="match status" value="1"/>
</dbReference>
<dbReference type="FunFam" id="3.40.50.720:FF:000180">
    <property type="entry name" value="4-hydroxy-tetrahydrodipicolinate reductase"/>
    <property type="match status" value="1"/>
</dbReference>
<dbReference type="Gene3D" id="3.30.360.10">
    <property type="entry name" value="Dihydrodipicolinate Reductase, domain 2"/>
    <property type="match status" value="1"/>
</dbReference>
<dbReference type="Gene3D" id="3.40.50.720">
    <property type="entry name" value="NAD(P)-binding Rossmann-like Domain"/>
    <property type="match status" value="1"/>
</dbReference>
<dbReference type="HAMAP" id="MF_00102">
    <property type="entry name" value="DapB"/>
    <property type="match status" value="1"/>
</dbReference>
<dbReference type="InterPro" id="IPR022663">
    <property type="entry name" value="DapB_C"/>
</dbReference>
<dbReference type="InterPro" id="IPR000846">
    <property type="entry name" value="DapB_N"/>
</dbReference>
<dbReference type="InterPro" id="IPR022664">
    <property type="entry name" value="DapB_N_CS"/>
</dbReference>
<dbReference type="InterPro" id="IPR023940">
    <property type="entry name" value="DHDPR_bac"/>
</dbReference>
<dbReference type="InterPro" id="IPR036291">
    <property type="entry name" value="NAD(P)-bd_dom_sf"/>
</dbReference>
<dbReference type="NCBIfam" id="TIGR00036">
    <property type="entry name" value="dapB"/>
    <property type="match status" value="1"/>
</dbReference>
<dbReference type="PANTHER" id="PTHR20836:SF0">
    <property type="entry name" value="4-HYDROXY-TETRAHYDRODIPICOLINATE REDUCTASE 1, CHLOROPLASTIC-RELATED"/>
    <property type="match status" value="1"/>
</dbReference>
<dbReference type="PANTHER" id="PTHR20836">
    <property type="entry name" value="DIHYDRODIPICOLINATE REDUCTASE"/>
    <property type="match status" value="1"/>
</dbReference>
<dbReference type="Pfam" id="PF05173">
    <property type="entry name" value="DapB_C"/>
    <property type="match status" value="1"/>
</dbReference>
<dbReference type="Pfam" id="PF01113">
    <property type="entry name" value="DapB_N"/>
    <property type="match status" value="1"/>
</dbReference>
<dbReference type="PIRSF" id="PIRSF000161">
    <property type="entry name" value="DHPR"/>
    <property type="match status" value="1"/>
</dbReference>
<dbReference type="SUPFAM" id="SSF55347">
    <property type="entry name" value="Glyceraldehyde-3-phosphate dehydrogenase-like, C-terminal domain"/>
    <property type="match status" value="1"/>
</dbReference>
<dbReference type="SUPFAM" id="SSF51735">
    <property type="entry name" value="NAD(P)-binding Rossmann-fold domains"/>
    <property type="match status" value="1"/>
</dbReference>
<dbReference type="PROSITE" id="PS01298">
    <property type="entry name" value="DAPB"/>
    <property type="match status" value="1"/>
</dbReference>
<keyword id="KW-0028">Amino-acid biosynthesis</keyword>
<keyword id="KW-0963">Cytoplasm</keyword>
<keyword id="KW-0220">Diaminopimelate biosynthesis</keyword>
<keyword id="KW-0457">Lysine biosynthesis</keyword>
<keyword id="KW-0520">NAD</keyword>
<keyword id="KW-0521">NADP</keyword>
<keyword id="KW-0560">Oxidoreductase</keyword>
<comment type="function">
    <text evidence="1">Catalyzes the conversion of 4-hydroxy-tetrahydrodipicolinate (HTPA) to tetrahydrodipicolinate.</text>
</comment>
<comment type="catalytic activity">
    <reaction evidence="1">
        <text>(S)-2,3,4,5-tetrahydrodipicolinate + NAD(+) + H2O = (2S,4S)-4-hydroxy-2,3,4,5-tetrahydrodipicolinate + NADH + H(+)</text>
        <dbReference type="Rhea" id="RHEA:35323"/>
        <dbReference type="ChEBI" id="CHEBI:15377"/>
        <dbReference type="ChEBI" id="CHEBI:15378"/>
        <dbReference type="ChEBI" id="CHEBI:16845"/>
        <dbReference type="ChEBI" id="CHEBI:57540"/>
        <dbReference type="ChEBI" id="CHEBI:57945"/>
        <dbReference type="ChEBI" id="CHEBI:67139"/>
        <dbReference type="EC" id="1.17.1.8"/>
    </reaction>
</comment>
<comment type="catalytic activity">
    <reaction evidence="1">
        <text>(S)-2,3,4,5-tetrahydrodipicolinate + NADP(+) + H2O = (2S,4S)-4-hydroxy-2,3,4,5-tetrahydrodipicolinate + NADPH + H(+)</text>
        <dbReference type="Rhea" id="RHEA:35331"/>
        <dbReference type="ChEBI" id="CHEBI:15377"/>
        <dbReference type="ChEBI" id="CHEBI:15378"/>
        <dbReference type="ChEBI" id="CHEBI:16845"/>
        <dbReference type="ChEBI" id="CHEBI:57783"/>
        <dbReference type="ChEBI" id="CHEBI:58349"/>
        <dbReference type="ChEBI" id="CHEBI:67139"/>
        <dbReference type="EC" id="1.17.1.8"/>
    </reaction>
</comment>
<comment type="pathway">
    <text evidence="1">Amino-acid biosynthesis; L-lysine biosynthesis via DAP pathway; (S)-tetrahydrodipicolinate from L-aspartate: step 4/4.</text>
</comment>
<comment type="subcellular location">
    <subcellularLocation>
        <location evidence="1">Cytoplasm</location>
    </subcellularLocation>
</comment>
<comment type="similarity">
    <text evidence="1">Belongs to the DapB family.</text>
</comment>
<comment type="caution">
    <text evidence="2">Was originally thought to be a dihydrodipicolinate reductase (DHDPR), catalyzing the conversion of dihydrodipicolinate to tetrahydrodipicolinate. However, it was shown in E.coli that the substrate of the enzymatic reaction is not dihydrodipicolinate (DHDP) but in fact (2S,4S)-4-hydroxy-2,3,4,5-tetrahydrodipicolinic acid (HTPA), the product released by the DapA-catalyzed reaction.</text>
</comment>